<reference key="1">
    <citation type="journal article" date="2007" name="J. Bacteriol.">
        <title>The genome sequence of avian pathogenic Escherichia coli strain O1:K1:H7 shares strong similarities with human extraintestinal pathogenic E. coli genomes.</title>
        <authorList>
            <person name="Johnson T.J."/>
            <person name="Kariyawasam S."/>
            <person name="Wannemuehler Y."/>
            <person name="Mangiamele P."/>
            <person name="Johnson S.J."/>
            <person name="Doetkott C."/>
            <person name="Skyberg J.A."/>
            <person name="Lynne A.M."/>
            <person name="Johnson J.R."/>
            <person name="Nolan L.K."/>
        </authorList>
    </citation>
    <scope>NUCLEOTIDE SEQUENCE [LARGE SCALE GENOMIC DNA]</scope>
</reference>
<accession>A1A8H1</accession>
<sequence>MKLQVLPLSQEAFSAYGDVIETQKRDFFHINNGLVERYHDLALVEILEQDRTLISINRAQPANLPLTIHELERHPLGTQAFIPMKGEVFVVVVALGDDKPDLSTLRAFITNGEQGVNYHRNVWHHPLFAWQRVTDFLTIDRGGSDNCDVESIPEQELCFA</sequence>
<protein>
    <recommendedName>
        <fullName evidence="1">Ureidoglycolate lyase</fullName>
        <ecNumber evidence="1">4.3.2.3</ecNumber>
    </recommendedName>
    <alternativeName>
        <fullName evidence="1">Ureidoglycolatase</fullName>
    </alternativeName>
</protein>
<feature type="chain" id="PRO_1000061353" description="Ureidoglycolate lyase">
    <location>
        <begin position="1"/>
        <end position="160"/>
    </location>
</feature>
<organism>
    <name type="scientific">Escherichia coli O1:K1 / APEC</name>
    <dbReference type="NCBI Taxonomy" id="405955"/>
    <lineage>
        <taxon>Bacteria</taxon>
        <taxon>Pseudomonadati</taxon>
        <taxon>Pseudomonadota</taxon>
        <taxon>Gammaproteobacteria</taxon>
        <taxon>Enterobacterales</taxon>
        <taxon>Enterobacteriaceae</taxon>
        <taxon>Escherichia</taxon>
    </lineage>
</organism>
<keyword id="KW-0456">Lyase</keyword>
<keyword id="KW-0659">Purine metabolism</keyword>
<keyword id="KW-1185">Reference proteome</keyword>
<comment type="function">
    <text evidence="1">Catalyzes the catabolism of the allantoin degradation intermediate (S)-ureidoglycolate, generating urea and glyoxylate. Involved in the anaerobic utilization of allantoin as sole nitrogen source. Reinforces the induction of genes involved in the degradation of allantoin and glyoxylate by producing glyoxylate.</text>
</comment>
<comment type="catalytic activity">
    <reaction evidence="1">
        <text>(S)-ureidoglycolate = urea + glyoxylate</text>
        <dbReference type="Rhea" id="RHEA:11304"/>
        <dbReference type="ChEBI" id="CHEBI:16199"/>
        <dbReference type="ChEBI" id="CHEBI:36655"/>
        <dbReference type="ChEBI" id="CHEBI:57296"/>
        <dbReference type="EC" id="4.3.2.3"/>
    </reaction>
</comment>
<comment type="cofactor">
    <cofactor evidence="1">
        <name>Ni(2+)</name>
        <dbReference type="ChEBI" id="CHEBI:49786"/>
    </cofactor>
</comment>
<comment type="pathway">
    <text evidence="1">Nitrogen metabolism; (S)-allantoin degradation.</text>
</comment>
<comment type="subunit">
    <text evidence="1">Homodimer.</text>
</comment>
<comment type="similarity">
    <text evidence="1">Belongs to the ureidoglycolate lyase family.</text>
</comment>
<dbReference type="EC" id="4.3.2.3" evidence="1"/>
<dbReference type="EMBL" id="CP000468">
    <property type="protein sequence ID" value="ABI99960.1"/>
    <property type="molecule type" value="Genomic_DNA"/>
</dbReference>
<dbReference type="RefSeq" id="WP_000776372.1">
    <property type="nucleotide sequence ID" value="NZ_CADILS010000009.1"/>
</dbReference>
<dbReference type="SMR" id="A1A8H1"/>
<dbReference type="KEGG" id="ecv:APECO1_1509"/>
<dbReference type="HOGENOM" id="CLU_070848_1_1_6"/>
<dbReference type="UniPathway" id="UPA00395"/>
<dbReference type="Proteomes" id="UP000008216">
    <property type="component" value="Chromosome"/>
</dbReference>
<dbReference type="GO" id="GO:0004848">
    <property type="term" value="F:ureidoglycolate hydrolase activity"/>
    <property type="evidence" value="ECO:0007669"/>
    <property type="project" value="InterPro"/>
</dbReference>
<dbReference type="GO" id="GO:0050385">
    <property type="term" value="F:ureidoglycolate lyase activity"/>
    <property type="evidence" value="ECO:0007669"/>
    <property type="project" value="UniProtKB-UniRule"/>
</dbReference>
<dbReference type="GO" id="GO:0000256">
    <property type="term" value="P:allantoin catabolic process"/>
    <property type="evidence" value="ECO:0007669"/>
    <property type="project" value="UniProtKB-UniRule"/>
</dbReference>
<dbReference type="GO" id="GO:0006145">
    <property type="term" value="P:purine nucleobase catabolic process"/>
    <property type="evidence" value="ECO:0007669"/>
    <property type="project" value="UniProtKB-UniRule"/>
</dbReference>
<dbReference type="CDD" id="cd20298">
    <property type="entry name" value="cupin_UAH"/>
    <property type="match status" value="1"/>
</dbReference>
<dbReference type="FunFam" id="2.60.120.480:FF:000001">
    <property type="entry name" value="Ureidoglycolate lyase"/>
    <property type="match status" value="1"/>
</dbReference>
<dbReference type="Gene3D" id="2.60.120.480">
    <property type="entry name" value="Ureidoglycolate hydrolase"/>
    <property type="match status" value="1"/>
</dbReference>
<dbReference type="HAMAP" id="MF_00616">
    <property type="entry name" value="Ureidogly_lyase"/>
    <property type="match status" value="1"/>
</dbReference>
<dbReference type="InterPro" id="IPR011051">
    <property type="entry name" value="RmlC_Cupin_sf"/>
</dbReference>
<dbReference type="InterPro" id="IPR047233">
    <property type="entry name" value="UAH_cupin"/>
</dbReference>
<dbReference type="InterPro" id="IPR007247">
    <property type="entry name" value="Ureidogly_lyase"/>
</dbReference>
<dbReference type="InterPro" id="IPR023525">
    <property type="entry name" value="Ureidogly_lyase_bac"/>
</dbReference>
<dbReference type="InterPro" id="IPR024060">
    <property type="entry name" value="Ureidoglycolate_lyase_dom_sf"/>
</dbReference>
<dbReference type="NCBIfam" id="NF002948">
    <property type="entry name" value="PRK03606.1-1"/>
    <property type="match status" value="1"/>
</dbReference>
<dbReference type="NCBIfam" id="NF009932">
    <property type="entry name" value="PRK13395.1"/>
    <property type="match status" value="1"/>
</dbReference>
<dbReference type="PANTHER" id="PTHR21221">
    <property type="entry name" value="UREIDOGLYCOLATE HYDROLASE"/>
    <property type="match status" value="1"/>
</dbReference>
<dbReference type="PANTHER" id="PTHR21221:SF1">
    <property type="entry name" value="UREIDOGLYCOLATE LYASE"/>
    <property type="match status" value="1"/>
</dbReference>
<dbReference type="Pfam" id="PF04115">
    <property type="entry name" value="Ureidogly_lyase"/>
    <property type="match status" value="1"/>
</dbReference>
<dbReference type="PIRSF" id="PIRSF017306">
    <property type="entry name" value="Ureidogly_hydro"/>
    <property type="match status" value="1"/>
</dbReference>
<dbReference type="SUPFAM" id="SSF51182">
    <property type="entry name" value="RmlC-like cupins"/>
    <property type="match status" value="1"/>
</dbReference>
<proteinExistence type="inferred from homology"/>
<evidence type="ECO:0000255" key="1">
    <source>
        <dbReference type="HAMAP-Rule" id="MF_00616"/>
    </source>
</evidence>
<gene>
    <name evidence="1" type="primary">allA</name>
    <name type="ordered locus">Ecok1_04670</name>
    <name type="ORF">APECO1_1509</name>
</gene>
<name>ALLA_ECOK1</name>